<proteinExistence type="evidence at protein level"/>
<feature type="chain" id="PRO_0000216486" description="Gustatory receptor 5a for trehalose">
    <location>
        <begin position="1"/>
        <end position="444"/>
    </location>
</feature>
<feature type="topological domain" description="Cytoplasmic" evidence="1">
    <location>
        <begin position="1"/>
        <end position="56"/>
    </location>
</feature>
<feature type="transmembrane region" description="Helical; Name=1" evidence="2">
    <location>
        <begin position="57"/>
        <end position="77"/>
    </location>
</feature>
<feature type="topological domain" description="Extracellular" evidence="1">
    <location>
        <begin position="78"/>
        <end position="178"/>
    </location>
</feature>
<feature type="transmembrane region" description="Helical; Name=2" evidence="2">
    <location>
        <begin position="179"/>
        <end position="199"/>
    </location>
</feature>
<feature type="topological domain" description="Cytoplasmic" evidence="1">
    <location>
        <begin position="200"/>
        <end position="214"/>
    </location>
</feature>
<feature type="transmembrane region" description="Helical; Name=3" evidence="2">
    <location>
        <begin position="215"/>
        <end position="235"/>
    </location>
</feature>
<feature type="topological domain" description="Extracellular" evidence="1">
    <location>
        <begin position="236"/>
        <end position="240"/>
    </location>
</feature>
<feature type="transmembrane region" description="Helical; Name=4" evidence="2">
    <location>
        <begin position="241"/>
        <end position="261"/>
    </location>
</feature>
<feature type="topological domain" description="Cytoplasmic" evidence="1">
    <location>
        <begin position="262"/>
        <end position="305"/>
    </location>
</feature>
<feature type="transmembrane region" description="Helical; Name=5" evidence="2">
    <location>
        <begin position="306"/>
        <end position="326"/>
    </location>
</feature>
<feature type="topological domain" description="Extracellular" evidence="1">
    <location>
        <begin position="327"/>
        <end position="338"/>
    </location>
</feature>
<feature type="transmembrane region" description="Helical; Name=6" evidence="2">
    <location>
        <begin position="339"/>
        <end position="359"/>
    </location>
</feature>
<feature type="topological domain" description="Cytoplasmic" evidence="1">
    <location>
        <begin position="360"/>
        <end position="410"/>
    </location>
</feature>
<feature type="transmembrane region" description="Helical; Name=7" evidence="2">
    <location>
        <begin position="411"/>
        <end position="431"/>
    </location>
</feature>
<feature type="topological domain" description="Extracellular" evidence="1">
    <location>
        <begin position="432"/>
        <end position="444"/>
    </location>
</feature>
<feature type="sequence variant" description="In strain: KY02-C351 and KY02-C372.">
    <original>K</original>
    <variation>N</variation>
    <location>
        <position position="5"/>
    </location>
</feature>
<feature type="sequence variant" description="In strain: AK17, Berkeley, Canton-S, EP(X)496, KY02-C304, KY02-C305, KY02-C312, KY02-C341, KY02-C419, KY02-C470 and w cx.">
    <original>I</original>
    <variation>V</variation>
    <location>
        <position position="19"/>
    </location>
</feature>
<feature type="sequence variant" description="In strain: KY02-C331, KY02-C392 and Oregon-R.">
    <original>M</original>
    <variation>I</variation>
    <location>
        <position position="23"/>
    </location>
</feature>
<feature type="sequence variant" description="In strain: KY02-C493.">
    <original>P</original>
    <variation>S</variation>
    <location>
        <position position="59"/>
    </location>
</feature>
<feature type="sequence variant" description="In strain: KY02-C301, KY02-C302, KY02-C308, KY02-C309, KY02-C310, KY02-C311, KY02-C314, KY02-C315, KY02-C319, KY02-C320, KY02-C325, KY02-C327, KY02-C330, KY02-C332, KY02-C335, KY02-C337, KY02-C342, KY02-C343, KY02-C344, KY02-C346, KY02-C347, KY02-C349, KY02-C351, KY02-C352, KY02-C353, KY02-C355, KY02-C358, KY02-C361, KY02-C367, KY02-C368, KY02-C372, KY02-C374, KY02-C376, KY02-C377, KY02-C378, KY02-C379, KY02-C380, KY02-C381, KY02-C382, KY02-C383, KY02-C384, KY02-C388, KY02-C389, KY02-C390, KY02-C393, KY02-C396, KY02-C400, KY02-C402, KY02-C404, KY02-C411, KY02-C412, KY02-C413, KY02-C414, KY02-C420, KY02-C425, KY02-C426, KY02-C429, KY02-C432, KY02-C433, KY02-C434, KY02-C435, KY02-C436, KY02-C439, KY02-C441, KY02-C446, KY02-C447, KY02-C449, KY02-C451, KY02-C453, KY02-C457, KY02-C460, KY02-C462, KY02-C463, KY02-C467, KY02-C469, KY02-C476, KY02-C477, KY02-C480, KY02-C483, KY02-C484, KY02-C485, KY02-C486, KY02-C488, KY02-C490, KY02-C491, KY02-C492, KY02-C493, KY02-C494, KY02-C496, KY02-C497, KY02-C500, KY02-C504, KY02-C508, KY02-C510, KY02-C511, KY02-C514, KY02-C515, KY02-C516, KY02-C517, KY02-C519, KY02-C520 and Singapore.">
    <original>C</original>
    <variation>S</variation>
    <location>
        <position position="73"/>
    </location>
</feature>
<feature type="sequence variant" description="In strain: KY02-C302, KY02-C316, KY02-C346, KY02-C350, KY02-C351, KY02-C374, KY02-C379, KY02-C380, KY02-C384, KY02-C390, KY02-C396, KY02-C407, KY02-C425, KY02-C428, KY02-C439, KY02-C443, KY02-C456, KY02-C463, KY02-C478, KY02-C493, KY02-C497, KY02-C500, KY02-C504, KY02-C517 and Singapore.">
    <original>T</original>
    <variation>A</variation>
    <location>
        <position position="164"/>
    </location>
</feature>
<feature type="sequence variant" description="In strain: KY02-C336.">
    <original>V</original>
    <variation>I</variation>
    <location>
        <position position="185"/>
    </location>
</feature>
<feature type="sequence variant" description="In strain: AK10, KY02-C315, KY02-C335, KY02-C402, KY02-C469, KY02-C516, KY02-C310, KY02-C319, KY02-C320, KY02-C330, KY02-C336, KY02-C342, KY02-C347, KY02-C355, KY02-C358, KY02-C382, KY02-C393, KY02-C404, KY02-C411, KY02-C432, KY02-C435, KY02-C449, KY02-C467, KY02-C483, KY02-C486, KY02-C488, KY02-C492, KY02-C496, KY02-C514, KY02-C519, Tananarive and w cv.">
    <original>L</original>
    <variation>H</variation>
    <location>
        <position position="216"/>
    </location>
</feature>
<feature type="sequence variant" description="In strain: AK07, AK10, AK13, KY02-C351, KY02-C439, KY02-C510, KY02-C301, KY02-C302, KY02-C303, KY02-C304, KY02-C308, KY02-C310, KY02-C311, KY02-C315, KY02-C316, KY02-C319, KY02-C320, KY02-C325, KY02-C326, KY02-C330, KY02-C331, KY02-C332, KY02-C335, KY02-C336, KY02-C341, KY02-C342, KY02-C346, KY02-C347, KY02-C348, KY02-C349, KY02-C350, KY02-C352, KY02-C355, KY02-C356, KY02-C358, KY02-C359, KY02-C361, KY02-C362, KY02-C367, KY02-C372, KY02-C373, KY02-C374, KY02-C376, KY02-C378, KY02-C380, KY02-C382, KY02-C383, KY02-C384, KY02-C387, KY02-C388, KY02-C390, KY02-C392, KY02-C393, KY02-C394, KY02-C400, KY02-C402, KY02-C404, KY02-C407, KY02-C411, KY02-C412, KY02-C413, KY02-C417, KY02-C419, KY02-C421, KY02-C426, KY02-C428, KY02-C432, KY02-C433, KY02-C434, KY02-C435, KY02-C441, KY02-C443, KY02-C446, KY02-C449, KY02-C451, KY02-C453, KY02-C454, KY02-C456, KY02-C457, KY02-C460, KY02-C462, KY02-C463, KY02-C467, KY02-C469, KY02-C470, KY02-C477, KY02-C478, KY02-C480, KY02-C483, KY02-C484, KY02-C485, KY02-C486, KY02-C488, KY02-C489, KY02-C490, KY02-C492, KY02-C493, KY02-C494, KY02-C496, KY02-C497, KY02-C500, KY02-C504, KY02-C511, KY02-C513, KY02-C514, KY02-C515, KY02-C516, KY02-C517, KY02-C519, KY02-C520, Oregon-R, Singapore, Tananarive and w cv; decreased sensitivity to trehalose." evidence="7">
    <original>A</original>
    <variation>T</variation>
    <location>
        <position position="218"/>
    </location>
</feature>
<feature type="sequence variant" description="In strain: KY02-C316, KY02-C350, KY02-C428, KY02-C443, KY02-C456 and KY02-C478.">
    <original>S</original>
    <variation>N</variation>
    <location>
        <position position="248"/>
    </location>
</feature>
<feature type="sequence variant" description="In strain: KY02-C304, KY02-C341, KY02-C419 and KY02-C470.">
    <original>R</original>
    <variation>L</variation>
    <location>
        <position position="277"/>
    </location>
</feature>
<feature type="sequence variant" description="In strain: KY02-C326, KY02-C348, KY02-C359, KY02-C362, KY02-C373, KY02-C394, KY02-C417, KY02-C434, KY02-C448, KY02-C451, KY02-C477 and KY02-C513.">
    <original>P</original>
    <variation>S</variation>
    <location>
        <position position="333"/>
    </location>
</feature>
<feature type="sequence conflict" description="In Ref. 2." evidence="13" ref="2">
    <original>LKNLKSGLEQIR</original>
    <variation>MSTFILITFYNP</variation>
    <location>
        <begin position="25"/>
        <end position="36"/>
    </location>
</feature>
<keyword id="KW-1003">Cell membrane</keyword>
<keyword id="KW-0472">Membrane</keyword>
<keyword id="KW-0675">Receptor</keyword>
<keyword id="KW-1185">Reference proteome</keyword>
<keyword id="KW-0807">Transducer</keyword>
<keyword id="KW-0812">Transmembrane</keyword>
<keyword id="KW-1133">Transmembrane helix</keyword>
<sequence length="444" mass="51169">MRQLKGRNRCNRAVRHLKIQGKMWLKNLKSGLEQIRESQVRGTRKNFLHDGSFHEAVAPVLAVAQCFCLMPVCGISAPTYRGLSFNRRSWRFWYSSLYLCSTSVDLAFSIRRVAHSVLDVRSVEPIVFHVSILIASWQFLNLAQLWPGLMRHWAAVERRLPGYTCCLQRARPARRLKLVAFVLLVVSLMEHLLSIISVVYYDFCPRRSDPVESYLLGASAQLFEVFPYSNWLAWLGKIQNVLLTFGWSYMDIFLMMLGMGLSEMLARLNRSLEQQVRQPMPEAYWTWSRTLYRSIVELIREVDDAVSGIMLISFGSNLYFICLQLLKSINTMPSSAHAVYFYFSLLFLLSRSTAVLLFVSAINDQAREPLRLLRLVPLKGYHPEVFRFAAELASDQVALTGLKFFNVTRKLFLAMAGTVATYELVLIQFHEDKKTWDCSPFNLD</sequence>
<name>GR05A_DROME</name>
<protein>
    <recommendedName>
        <fullName>Gustatory receptor 5a for trehalose</fullName>
    </recommendedName>
    <alternativeName>
        <fullName>Trehalose receptor</fullName>
    </alternativeName>
</protein>
<evidence type="ECO:0000250" key="1"/>
<evidence type="ECO:0000255" key="2"/>
<evidence type="ECO:0000269" key="3">
    <source>
    </source>
</evidence>
<evidence type="ECO:0000269" key="4">
    <source>
    </source>
</evidence>
<evidence type="ECO:0000269" key="5">
    <source>
    </source>
</evidence>
<evidence type="ECO:0000269" key="6">
    <source>
    </source>
</evidence>
<evidence type="ECO:0000269" key="7">
    <source>
    </source>
</evidence>
<evidence type="ECO:0000269" key="8">
    <source>
    </source>
</evidence>
<evidence type="ECO:0000269" key="9">
    <source>
    </source>
</evidence>
<evidence type="ECO:0000269" key="10">
    <source>
    </source>
</evidence>
<evidence type="ECO:0000269" key="11">
    <source>
    </source>
</evidence>
<evidence type="ECO:0000269" key="12">
    <source>
    </source>
</evidence>
<evidence type="ECO:0000305" key="13"/>
<gene>
    <name type="primary">Gr5a</name>
    <name type="synonym">GRLU.7</name>
    <name type="synonym">Tre</name>
    <name type="ORF">CG15779</name>
</gene>
<comment type="function">
    <text evidence="3 4 5 6 7 8 9 10 11 12">Gustatory receptor required for response to the sugar trehalose in taste neurons. Gr5a neurons selectively respond to sugars, in contrast to Gr66a cells which respond to bitter compounds. Flies are attracted to sugars and avoid bitter substances, suggesting that Gr5a neuron activity is sufficient to mediate acceptance behavior. Sugar signal transduction occurs through coupling with G-proteins such as Galpha49B and G-salpha60A.</text>
</comment>
<comment type="subcellular location">
    <subcellularLocation>
        <location evidence="1">Cell membrane</location>
        <topology evidence="1">Multi-pass membrane protein</topology>
    </subcellularLocation>
</comment>
<comment type="tissue specificity">
    <text evidence="4 5 6">Expressed in labellar chemosensory neurons.</text>
</comment>
<comment type="disruption phenotype">
    <text evidence="3 8 10">Flies exhibit trehalose-specific physiological and behavioral defects (reduced response by chemosensory neurons of the labellar taste hairs).</text>
</comment>
<comment type="miscellaneous">
    <text>Variant Thr-218 was found to be the ancestral form in D.melanogaster, suggesting that low trehalose sensitivity was an ancestral form with respect to the receptor function.</text>
</comment>
<comment type="similarity">
    <text evidence="13">Belongs to the insect chemoreceptor superfamily. Gustatory receptor (GR) family. Gr5a subfamily.</text>
</comment>
<dbReference type="EMBL" id="AB066619">
    <property type="protein sequence ID" value="BAB68243.1"/>
    <property type="molecule type" value="Genomic_DNA"/>
</dbReference>
<dbReference type="EMBL" id="AB066620">
    <property type="protein sequence ID" value="BAB68244.1"/>
    <property type="molecule type" value="Genomic_DNA"/>
</dbReference>
<dbReference type="EMBL" id="AB066621">
    <property type="protein sequence ID" value="BAB68245.1"/>
    <property type="molecule type" value="Genomic_DNA"/>
</dbReference>
<dbReference type="EMBL" id="AB066622">
    <property type="protein sequence ID" value="BAB68246.1"/>
    <property type="molecule type" value="Genomic_DNA"/>
</dbReference>
<dbReference type="EMBL" id="AB066623">
    <property type="protein sequence ID" value="BAB68247.1"/>
    <property type="molecule type" value="Genomic_DNA"/>
</dbReference>
<dbReference type="EMBL" id="AB066624">
    <property type="protein sequence ID" value="BAB68248.1"/>
    <property type="molecule type" value="Genomic_DNA"/>
</dbReference>
<dbReference type="EMBL" id="AB066625">
    <property type="protein sequence ID" value="BAB68249.1"/>
    <property type="molecule type" value="Genomic_DNA"/>
</dbReference>
<dbReference type="EMBL" id="AB066626">
    <property type="protein sequence ID" value="BAB68250.1"/>
    <property type="molecule type" value="Genomic_DNA"/>
</dbReference>
<dbReference type="EMBL" id="AB066627">
    <property type="protein sequence ID" value="BAB68251.1"/>
    <property type="molecule type" value="Genomic_DNA"/>
</dbReference>
<dbReference type="EMBL" id="AB066628">
    <property type="protein sequence ID" value="BAB68252.1"/>
    <property type="molecule type" value="Genomic_DNA"/>
</dbReference>
<dbReference type="EMBL" id="AB066629">
    <property type="protein sequence ID" value="BAB68253.1"/>
    <property type="molecule type" value="Genomic_DNA"/>
</dbReference>
<dbReference type="EMBL" id="AB066630">
    <property type="protein sequence ID" value="BAB68254.1"/>
    <property type="molecule type" value="Genomic_DNA"/>
</dbReference>
<dbReference type="EMBL" id="AB066631">
    <property type="protein sequence ID" value="BAB68255.1"/>
    <property type="molecule type" value="Genomic_DNA"/>
</dbReference>
<dbReference type="EMBL" id="AB066632">
    <property type="protein sequence ID" value="BAB68256.1"/>
    <property type="molecule type" value="Genomic_DNA"/>
</dbReference>
<dbReference type="EMBL" id="AB066633">
    <property type="protein sequence ID" value="BAB68257.1"/>
    <property type="molecule type" value="Genomic_DNA"/>
</dbReference>
<dbReference type="EMBL" id="AB066634">
    <property type="protein sequence ID" value="BAB68258.1"/>
    <property type="molecule type" value="Genomic_DNA"/>
</dbReference>
<dbReference type="EMBL" id="AB066635">
    <property type="protein sequence ID" value="BAB68259.1"/>
    <property type="molecule type" value="Genomic_DNA"/>
</dbReference>
<dbReference type="EMBL" id="AB066636">
    <property type="protein sequence ID" value="BAB68260.1"/>
    <property type="molecule type" value="Genomic_DNA"/>
</dbReference>
<dbReference type="EMBL" id="AB066637">
    <property type="protein sequence ID" value="BAB68261.1"/>
    <property type="molecule type" value="Genomic_DNA"/>
</dbReference>
<dbReference type="EMBL" id="AB066638">
    <property type="protein sequence ID" value="BAB68262.1"/>
    <property type="molecule type" value="Genomic_DNA"/>
</dbReference>
<dbReference type="EMBL" id="AB066639">
    <property type="protein sequence ID" value="BAB68263.1"/>
    <property type="molecule type" value="Genomic_DNA"/>
</dbReference>
<dbReference type="EMBL" id="AB066640">
    <property type="protein sequence ID" value="BAB68264.1"/>
    <property type="molecule type" value="Genomic_DNA"/>
</dbReference>
<dbReference type="EMBL" id="AB066641">
    <property type="protein sequence ID" value="BAB68265.1"/>
    <property type="molecule type" value="mRNA"/>
</dbReference>
<dbReference type="EMBL" id="AB066642">
    <property type="protein sequence ID" value="BAB68266.1"/>
    <property type="molecule type" value="mRNA"/>
</dbReference>
<dbReference type="EMBL" id="AB066643">
    <property type="protein sequence ID" value="BAB68267.1"/>
    <property type="molecule type" value="mRNA"/>
</dbReference>
<dbReference type="EMBL" id="AB162449">
    <property type="protein sequence ID" value="BAD42667.1"/>
    <property type="molecule type" value="Genomic_DNA"/>
</dbReference>
<dbReference type="EMBL" id="AB162450">
    <property type="protein sequence ID" value="BAD42668.1"/>
    <property type="molecule type" value="Genomic_DNA"/>
</dbReference>
<dbReference type="EMBL" id="AB162451">
    <property type="protein sequence ID" value="BAD42669.1"/>
    <property type="molecule type" value="Genomic_DNA"/>
</dbReference>
<dbReference type="EMBL" id="AB162452">
    <property type="protein sequence ID" value="BAD42670.1"/>
    <property type="molecule type" value="Genomic_DNA"/>
</dbReference>
<dbReference type="EMBL" id="AB162453">
    <property type="protein sequence ID" value="BAD42671.1"/>
    <property type="molecule type" value="Genomic_DNA"/>
</dbReference>
<dbReference type="EMBL" id="AB162454">
    <property type="protein sequence ID" value="BAD42672.1"/>
    <property type="molecule type" value="Genomic_DNA"/>
</dbReference>
<dbReference type="EMBL" id="AB162455">
    <property type="protein sequence ID" value="BAD42673.1"/>
    <property type="molecule type" value="Genomic_DNA"/>
</dbReference>
<dbReference type="EMBL" id="AB162456">
    <property type="protein sequence ID" value="BAD42674.1"/>
    <property type="molecule type" value="Genomic_DNA"/>
</dbReference>
<dbReference type="EMBL" id="AB162457">
    <property type="protein sequence ID" value="BAD42675.1"/>
    <property type="molecule type" value="Genomic_DNA"/>
</dbReference>
<dbReference type="EMBL" id="AB162458">
    <property type="protein sequence ID" value="BAD42676.1"/>
    <property type="molecule type" value="Genomic_DNA"/>
</dbReference>
<dbReference type="EMBL" id="AB162459">
    <property type="protein sequence ID" value="BAD42677.1"/>
    <property type="molecule type" value="Genomic_DNA"/>
</dbReference>
<dbReference type="EMBL" id="AB162460">
    <property type="protein sequence ID" value="BAD42678.1"/>
    <property type="molecule type" value="Genomic_DNA"/>
</dbReference>
<dbReference type="EMBL" id="AB162461">
    <property type="protein sequence ID" value="BAD42679.1"/>
    <property type="molecule type" value="Genomic_DNA"/>
</dbReference>
<dbReference type="EMBL" id="AB162462">
    <property type="protein sequence ID" value="BAD42680.1"/>
    <property type="molecule type" value="Genomic_DNA"/>
</dbReference>
<dbReference type="EMBL" id="AB162463">
    <property type="protein sequence ID" value="BAD42681.1"/>
    <property type="molecule type" value="Genomic_DNA"/>
</dbReference>
<dbReference type="EMBL" id="AB162464">
    <property type="protein sequence ID" value="BAD42682.1"/>
    <property type="molecule type" value="Genomic_DNA"/>
</dbReference>
<dbReference type="EMBL" id="AB162465">
    <property type="protein sequence ID" value="BAD42683.1"/>
    <property type="molecule type" value="Genomic_DNA"/>
</dbReference>
<dbReference type="EMBL" id="AB162466">
    <property type="protein sequence ID" value="BAD42684.1"/>
    <property type="molecule type" value="Genomic_DNA"/>
</dbReference>
<dbReference type="EMBL" id="AB162467">
    <property type="protein sequence ID" value="BAD42685.1"/>
    <property type="molecule type" value="Genomic_DNA"/>
</dbReference>
<dbReference type="EMBL" id="AB162468">
    <property type="protein sequence ID" value="BAD42686.1"/>
    <property type="molecule type" value="Genomic_DNA"/>
</dbReference>
<dbReference type="EMBL" id="AB162469">
    <property type="protein sequence ID" value="BAD42687.1"/>
    <property type="molecule type" value="Genomic_DNA"/>
</dbReference>
<dbReference type="EMBL" id="AB162470">
    <property type="protein sequence ID" value="BAD42688.1"/>
    <property type="molecule type" value="Genomic_DNA"/>
</dbReference>
<dbReference type="EMBL" id="AB162471">
    <property type="protein sequence ID" value="BAD42689.1"/>
    <property type="molecule type" value="Genomic_DNA"/>
</dbReference>
<dbReference type="EMBL" id="AB162472">
    <property type="protein sequence ID" value="BAD42690.1"/>
    <property type="molecule type" value="Genomic_DNA"/>
</dbReference>
<dbReference type="EMBL" id="AB162473">
    <property type="protein sequence ID" value="BAD42691.1"/>
    <property type="molecule type" value="Genomic_DNA"/>
</dbReference>
<dbReference type="EMBL" id="AB162474">
    <property type="protein sequence ID" value="BAD42692.1"/>
    <property type="molecule type" value="Genomic_DNA"/>
</dbReference>
<dbReference type="EMBL" id="AB162475">
    <property type="protein sequence ID" value="BAD42693.1"/>
    <property type="molecule type" value="Genomic_DNA"/>
</dbReference>
<dbReference type="EMBL" id="AB162476">
    <property type="protein sequence ID" value="BAD42694.1"/>
    <property type="molecule type" value="Genomic_DNA"/>
</dbReference>
<dbReference type="EMBL" id="AB162477">
    <property type="protein sequence ID" value="BAD42695.1"/>
    <property type="molecule type" value="Genomic_DNA"/>
</dbReference>
<dbReference type="EMBL" id="AB162478">
    <property type="protein sequence ID" value="BAD42696.1"/>
    <property type="molecule type" value="Genomic_DNA"/>
</dbReference>
<dbReference type="EMBL" id="AB162479">
    <property type="protein sequence ID" value="BAD42697.1"/>
    <property type="molecule type" value="Genomic_DNA"/>
</dbReference>
<dbReference type="EMBL" id="AB162480">
    <property type="protein sequence ID" value="BAD42698.1"/>
    <property type="molecule type" value="Genomic_DNA"/>
</dbReference>
<dbReference type="EMBL" id="AB162481">
    <property type="protein sequence ID" value="BAD42699.1"/>
    <property type="molecule type" value="Genomic_DNA"/>
</dbReference>
<dbReference type="EMBL" id="AB162482">
    <property type="protein sequence ID" value="BAD42700.1"/>
    <property type="molecule type" value="Genomic_DNA"/>
</dbReference>
<dbReference type="EMBL" id="AB162483">
    <property type="protein sequence ID" value="BAD42701.1"/>
    <property type="molecule type" value="Genomic_DNA"/>
</dbReference>
<dbReference type="EMBL" id="AB162484">
    <property type="protein sequence ID" value="BAD42702.1"/>
    <property type="molecule type" value="Genomic_DNA"/>
</dbReference>
<dbReference type="EMBL" id="AB162485">
    <property type="protein sequence ID" value="BAD42703.1"/>
    <property type="molecule type" value="Genomic_DNA"/>
</dbReference>
<dbReference type="EMBL" id="AB162486">
    <property type="protein sequence ID" value="BAD42704.1"/>
    <property type="molecule type" value="Genomic_DNA"/>
</dbReference>
<dbReference type="EMBL" id="AB162487">
    <property type="protein sequence ID" value="BAD42705.1"/>
    <property type="molecule type" value="Genomic_DNA"/>
</dbReference>
<dbReference type="EMBL" id="AB162488">
    <property type="protein sequence ID" value="BAD42706.1"/>
    <property type="molecule type" value="Genomic_DNA"/>
</dbReference>
<dbReference type="EMBL" id="AB162489">
    <property type="protein sequence ID" value="BAD42707.1"/>
    <property type="molecule type" value="Genomic_DNA"/>
</dbReference>
<dbReference type="EMBL" id="AB162490">
    <property type="protein sequence ID" value="BAD42708.1"/>
    <property type="molecule type" value="Genomic_DNA"/>
</dbReference>
<dbReference type="EMBL" id="AB162491">
    <property type="protein sequence ID" value="BAD42709.1"/>
    <property type="molecule type" value="Genomic_DNA"/>
</dbReference>
<dbReference type="EMBL" id="AB162492">
    <property type="protein sequence ID" value="BAD42710.1"/>
    <property type="molecule type" value="Genomic_DNA"/>
</dbReference>
<dbReference type="EMBL" id="AB162493">
    <property type="protein sequence ID" value="BAD42711.1"/>
    <property type="molecule type" value="Genomic_DNA"/>
</dbReference>
<dbReference type="EMBL" id="AB162494">
    <property type="protein sequence ID" value="BAD42712.1"/>
    <property type="molecule type" value="Genomic_DNA"/>
</dbReference>
<dbReference type="EMBL" id="AB162495">
    <property type="protein sequence ID" value="BAD42713.1"/>
    <property type="molecule type" value="Genomic_DNA"/>
</dbReference>
<dbReference type="EMBL" id="AB162496">
    <property type="protein sequence ID" value="BAD42714.1"/>
    <property type="molecule type" value="Genomic_DNA"/>
</dbReference>
<dbReference type="EMBL" id="AB162497">
    <property type="protein sequence ID" value="BAD42715.1"/>
    <property type="molecule type" value="Genomic_DNA"/>
</dbReference>
<dbReference type="EMBL" id="AB162498">
    <property type="protein sequence ID" value="BAD42716.1"/>
    <property type="molecule type" value="Genomic_DNA"/>
</dbReference>
<dbReference type="EMBL" id="AB162499">
    <property type="protein sequence ID" value="BAD42717.1"/>
    <property type="molecule type" value="Genomic_DNA"/>
</dbReference>
<dbReference type="EMBL" id="AB162500">
    <property type="protein sequence ID" value="BAD42718.1"/>
    <property type="molecule type" value="Genomic_DNA"/>
</dbReference>
<dbReference type="EMBL" id="AB162501">
    <property type="protein sequence ID" value="BAD42719.1"/>
    <property type="molecule type" value="Genomic_DNA"/>
</dbReference>
<dbReference type="EMBL" id="AB162502">
    <property type="protein sequence ID" value="BAD42720.1"/>
    <property type="molecule type" value="Genomic_DNA"/>
</dbReference>
<dbReference type="EMBL" id="AB162503">
    <property type="protein sequence ID" value="BAD42721.1"/>
    <property type="molecule type" value="Genomic_DNA"/>
</dbReference>
<dbReference type="EMBL" id="AB162504">
    <property type="protein sequence ID" value="BAD42722.1"/>
    <property type="molecule type" value="Genomic_DNA"/>
</dbReference>
<dbReference type="EMBL" id="AB162505">
    <property type="protein sequence ID" value="BAD42723.1"/>
    <property type="molecule type" value="Genomic_DNA"/>
</dbReference>
<dbReference type="EMBL" id="AB162506">
    <property type="protein sequence ID" value="BAD42724.1"/>
    <property type="molecule type" value="Genomic_DNA"/>
</dbReference>
<dbReference type="EMBL" id="AB162507">
    <property type="protein sequence ID" value="BAD42725.1"/>
    <property type="molecule type" value="Genomic_DNA"/>
</dbReference>
<dbReference type="EMBL" id="AB162508">
    <property type="protein sequence ID" value="BAD42726.1"/>
    <property type="molecule type" value="Genomic_DNA"/>
</dbReference>
<dbReference type="EMBL" id="AB162509">
    <property type="protein sequence ID" value="BAD42727.1"/>
    <property type="molecule type" value="Genomic_DNA"/>
</dbReference>
<dbReference type="EMBL" id="AB162510">
    <property type="protein sequence ID" value="BAD42728.1"/>
    <property type="molecule type" value="Genomic_DNA"/>
</dbReference>
<dbReference type="EMBL" id="AB162511">
    <property type="protein sequence ID" value="BAD42729.1"/>
    <property type="molecule type" value="Genomic_DNA"/>
</dbReference>
<dbReference type="EMBL" id="AB162512">
    <property type="protein sequence ID" value="BAD42730.1"/>
    <property type="molecule type" value="Genomic_DNA"/>
</dbReference>
<dbReference type="EMBL" id="AB162513">
    <property type="protein sequence ID" value="BAD42731.1"/>
    <property type="molecule type" value="Genomic_DNA"/>
</dbReference>
<dbReference type="EMBL" id="AB162514">
    <property type="protein sequence ID" value="BAD42732.1"/>
    <property type="molecule type" value="Genomic_DNA"/>
</dbReference>
<dbReference type="EMBL" id="AB162515">
    <property type="protein sequence ID" value="BAD42733.1"/>
    <property type="molecule type" value="Genomic_DNA"/>
</dbReference>
<dbReference type="EMBL" id="AB162516">
    <property type="protein sequence ID" value="BAD42734.1"/>
    <property type="molecule type" value="Genomic_DNA"/>
</dbReference>
<dbReference type="EMBL" id="AB162517">
    <property type="protein sequence ID" value="BAD42735.1"/>
    <property type="molecule type" value="Genomic_DNA"/>
</dbReference>
<dbReference type="EMBL" id="AB162518">
    <property type="protein sequence ID" value="BAD42736.1"/>
    <property type="molecule type" value="Genomic_DNA"/>
</dbReference>
<dbReference type="EMBL" id="AB162519">
    <property type="protein sequence ID" value="BAD42737.1"/>
    <property type="molecule type" value="Genomic_DNA"/>
</dbReference>
<dbReference type="EMBL" id="AB162520">
    <property type="protein sequence ID" value="BAD42738.1"/>
    <property type="molecule type" value="Genomic_DNA"/>
</dbReference>
<dbReference type="EMBL" id="AB162521">
    <property type="protein sequence ID" value="BAD42739.1"/>
    <property type="molecule type" value="Genomic_DNA"/>
</dbReference>
<dbReference type="EMBL" id="AB162522">
    <property type="protein sequence ID" value="BAD42740.1"/>
    <property type="molecule type" value="Genomic_DNA"/>
</dbReference>
<dbReference type="EMBL" id="AB162523">
    <property type="protein sequence ID" value="BAD42741.1"/>
    <property type="molecule type" value="Genomic_DNA"/>
</dbReference>
<dbReference type="EMBL" id="AB162524">
    <property type="protein sequence ID" value="BAD42742.1"/>
    <property type="molecule type" value="Genomic_DNA"/>
</dbReference>
<dbReference type="EMBL" id="AB162525">
    <property type="protein sequence ID" value="BAD42743.1"/>
    <property type="molecule type" value="Genomic_DNA"/>
</dbReference>
<dbReference type="EMBL" id="AB162526">
    <property type="protein sequence ID" value="BAD42744.1"/>
    <property type="molecule type" value="Genomic_DNA"/>
</dbReference>
<dbReference type="EMBL" id="AB162527">
    <property type="protein sequence ID" value="BAD42745.1"/>
    <property type="molecule type" value="Genomic_DNA"/>
</dbReference>
<dbReference type="EMBL" id="AB162528">
    <property type="protein sequence ID" value="BAD42746.1"/>
    <property type="molecule type" value="Genomic_DNA"/>
</dbReference>
<dbReference type="EMBL" id="AB162529">
    <property type="protein sequence ID" value="BAD42747.1"/>
    <property type="molecule type" value="Genomic_DNA"/>
</dbReference>
<dbReference type="EMBL" id="AB162530">
    <property type="protein sequence ID" value="BAD42748.1"/>
    <property type="molecule type" value="Genomic_DNA"/>
</dbReference>
<dbReference type="EMBL" id="AB162531">
    <property type="protein sequence ID" value="BAD42749.1"/>
    <property type="molecule type" value="Genomic_DNA"/>
</dbReference>
<dbReference type="EMBL" id="AB162532">
    <property type="protein sequence ID" value="BAD42750.1"/>
    <property type="molecule type" value="Genomic_DNA"/>
</dbReference>
<dbReference type="EMBL" id="AB162533">
    <property type="protein sequence ID" value="BAD42751.1"/>
    <property type="molecule type" value="Genomic_DNA"/>
</dbReference>
<dbReference type="EMBL" id="AB162534">
    <property type="protein sequence ID" value="BAD42752.1"/>
    <property type="molecule type" value="Genomic_DNA"/>
</dbReference>
<dbReference type="EMBL" id="AB162535">
    <property type="protein sequence ID" value="BAD42753.1"/>
    <property type="molecule type" value="Genomic_DNA"/>
</dbReference>
<dbReference type="EMBL" id="AB162536">
    <property type="protein sequence ID" value="BAD42754.1"/>
    <property type="molecule type" value="Genomic_DNA"/>
</dbReference>
<dbReference type="EMBL" id="AB162537">
    <property type="protein sequence ID" value="BAD42755.1"/>
    <property type="molecule type" value="Genomic_DNA"/>
</dbReference>
<dbReference type="EMBL" id="AB162538">
    <property type="protein sequence ID" value="BAD42756.1"/>
    <property type="molecule type" value="Genomic_DNA"/>
</dbReference>
<dbReference type="EMBL" id="AB162539">
    <property type="protein sequence ID" value="BAD42757.1"/>
    <property type="molecule type" value="Genomic_DNA"/>
</dbReference>
<dbReference type="EMBL" id="AB162540">
    <property type="protein sequence ID" value="BAD42758.1"/>
    <property type="molecule type" value="Genomic_DNA"/>
</dbReference>
<dbReference type="EMBL" id="AB162541">
    <property type="protein sequence ID" value="BAD42759.1"/>
    <property type="molecule type" value="Genomic_DNA"/>
</dbReference>
<dbReference type="EMBL" id="AB162542">
    <property type="protein sequence ID" value="BAD42760.1"/>
    <property type="molecule type" value="Genomic_DNA"/>
</dbReference>
<dbReference type="EMBL" id="AB162543">
    <property type="protein sequence ID" value="BAD42761.1"/>
    <property type="molecule type" value="Genomic_DNA"/>
</dbReference>
<dbReference type="EMBL" id="AB162544">
    <property type="protein sequence ID" value="BAD42762.1"/>
    <property type="molecule type" value="Genomic_DNA"/>
</dbReference>
<dbReference type="EMBL" id="AB162545">
    <property type="protein sequence ID" value="BAD42763.1"/>
    <property type="molecule type" value="Genomic_DNA"/>
</dbReference>
<dbReference type="EMBL" id="AB162546">
    <property type="protein sequence ID" value="BAD42764.1"/>
    <property type="molecule type" value="Genomic_DNA"/>
</dbReference>
<dbReference type="EMBL" id="AB162547">
    <property type="protein sequence ID" value="BAD42765.1"/>
    <property type="molecule type" value="Genomic_DNA"/>
</dbReference>
<dbReference type="EMBL" id="AB162548">
    <property type="protein sequence ID" value="BAD42766.1"/>
    <property type="molecule type" value="Genomic_DNA"/>
</dbReference>
<dbReference type="EMBL" id="AB162549">
    <property type="protein sequence ID" value="BAD42767.1"/>
    <property type="molecule type" value="Genomic_DNA"/>
</dbReference>
<dbReference type="EMBL" id="AB162550">
    <property type="protein sequence ID" value="BAD42768.1"/>
    <property type="molecule type" value="Genomic_DNA"/>
</dbReference>
<dbReference type="EMBL" id="AB162551">
    <property type="protein sequence ID" value="BAD42769.1"/>
    <property type="molecule type" value="Genomic_DNA"/>
</dbReference>
<dbReference type="EMBL" id="AB162552">
    <property type="protein sequence ID" value="BAD42770.1"/>
    <property type="molecule type" value="Genomic_DNA"/>
</dbReference>
<dbReference type="EMBL" id="AB162553">
    <property type="protein sequence ID" value="BAD42771.1"/>
    <property type="molecule type" value="Genomic_DNA"/>
</dbReference>
<dbReference type="EMBL" id="AB162555">
    <property type="protein sequence ID" value="BAD42773.1"/>
    <property type="molecule type" value="Genomic_DNA"/>
</dbReference>
<dbReference type="EMBL" id="AB162554">
    <property type="protein sequence ID" value="BAD42772.1"/>
    <property type="molecule type" value="Genomic_DNA"/>
</dbReference>
<dbReference type="EMBL" id="AB162556">
    <property type="protein sequence ID" value="BAD42774.1"/>
    <property type="molecule type" value="Genomic_DNA"/>
</dbReference>
<dbReference type="EMBL" id="AB162557">
    <property type="protein sequence ID" value="BAD42775.1"/>
    <property type="molecule type" value="Genomic_DNA"/>
</dbReference>
<dbReference type="EMBL" id="AB162558">
    <property type="protein sequence ID" value="BAD42776.1"/>
    <property type="molecule type" value="Genomic_DNA"/>
</dbReference>
<dbReference type="EMBL" id="AB162559">
    <property type="protein sequence ID" value="BAD42777.1"/>
    <property type="molecule type" value="Genomic_DNA"/>
</dbReference>
<dbReference type="EMBL" id="AB162560">
    <property type="protein sequence ID" value="BAD42778.1"/>
    <property type="molecule type" value="Genomic_DNA"/>
</dbReference>
<dbReference type="EMBL" id="AB162561">
    <property type="protein sequence ID" value="BAD42779.1"/>
    <property type="molecule type" value="Genomic_DNA"/>
</dbReference>
<dbReference type="EMBL" id="AB162562">
    <property type="protein sequence ID" value="BAD42780.1"/>
    <property type="molecule type" value="Genomic_DNA"/>
</dbReference>
<dbReference type="EMBL" id="AB162563">
    <property type="protein sequence ID" value="BAD42781.1"/>
    <property type="molecule type" value="Genomic_DNA"/>
</dbReference>
<dbReference type="EMBL" id="AB162564">
    <property type="protein sequence ID" value="BAD42782.1"/>
    <property type="molecule type" value="Genomic_DNA"/>
</dbReference>
<dbReference type="EMBL" id="AB162565">
    <property type="protein sequence ID" value="BAD42783.1"/>
    <property type="molecule type" value="Genomic_DNA"/>
</dbReference>
<dbReference type="EMBL" id="AB162566">
    <property type="protein sequence ID" value="BAD42784.1"/>
    <property type="molecule type" value="Genomic_DNA"/>
</dbReference>
<dbReference type="EMBL" id="AB162567">
    <property type="protein sequence ID" value="BAD42785.1"/>
    <property type="molecule type" value="Genomic_DNA"/>
</dbReference>
<dbReference type="EMBL" id="AB162568">
    <property type="protein sequence ID" value="BAD42786.1"/>
    <property type="molecule type" value="Genomic_DNA"/>
</dbReference>
<dbReference type="EMBL" id="AB162569">
    <property type="protein sequence ID" value="BAD42787.1"/>
    <property type="molecule type" value="Genomic_DNA"/>
</dbReference>
<dbReference type="EMBL" id="AB162570">
    <property type="protein sequence ID" value="BAD42788.1"/>
    <property type="molecule type" value="Genomic_DNA"/>
</dbReference>
<dbReference type="EMBL" id="AB162571">
    <property type="protein sequence ID" value="BAD42789.1"/>
    <property type="molecule type" value="Genomic_DNA"/>
</dbReference>
<dbReference type="EMBL" id="AB162572">
    <property type="protein sequence ID" value="BAD42790.1"/>
    <property type="molecule type" value="Genomic_DNA"/>
</dbReference>
<dbReference type="EMBL" id="AB162573">
    <property type="protein sequence ID" value="BAD42791.1"/>
    <property type="molecule type" value="Genomic_DNA"/>
</dbReference>
<dbReference type="EMBL" id="AB162574">
    <property type="protein sequence ID" value="BAD42792.1"/>
    <property type="molecule type" value="Genomic_DNA"/>
</dbReference>
<dbReference type="EMBL" id="AB162575">
    <property type="protein sequence ID" value="BAD42793.1"/>
    <property type="molecule type" value="Genomic_DNA"/>
</dbReference>
<dbReference type="EMBL" id="AB162576">
    <property type="protein sequence ID" value="BAD42794.1"/>
    <property type="molecule type" value="Genomic_DNA"/>
</dbReference>
<dbReference type="EMBL" id="AB162577">
    <property type="protein sequence ID" value="BAD42795.1"/>
    <property type="molecule type" value="Genomic_DNA"/>
</dbReference>
<dbReference type="EMBL" id="AB162578">
    <property type="protein sequence ID" value="BAD42796.1"/>
    <property type="molecule type" value="Genomic_DNA"/>
</dbReference>
<dbReference type="EMBL" id="AB162579">
    <property type="protein sequence ID" value="BAD42797.1"/>
    <property type="molecule type" value="Genomic_DNA"/>
</dbReference>
<dbReference type="EMBL" id="AB162580">
    <property type="protein sequence ID" value="BAD42798.1"/>
    <property type="molecule type" value="Genomic_DNA"/>
</dbReference>
<dbReference type="EMBL" id="AB162581">
    <property type="protein sequence ID" value="BAD42799.1"/>
    <property type="molecule type" value="Genomic_DNA"/>
</dbReference>
<dbReference type="EMBL" id="AB162582">
    <property type="protein sequence ID" value="BAD42800.1"/>
    <property type="molecule type" value="Genomic_DNA"/>
</dbReference>
<dbReference type="EMBL" id="AB162583">
    <property type="protein sequence ID" value="BAD42801.1"/>
    <property type="molecule type" value="Genomic_DNA"/>
</dbReference>
<dbReference type="EMBL" id="AB162584">
    <property type="protein sequence ID" value="BAD42802.1"/>
    <property type="molecule type" value="Genomic_DNA"/>
</dbReference>
<dbReference type="EMBL" id="AB162585">
    <property type="protein sequence ID" value="BAD42803.1"/>
    <property type="molecule type" value="Genomic_DNA"/>
</dbReference>
<dbReference type="EMBL" id="AB162586">
    <property type="protein sequence ID" value="BAD42804.1"/>
    <property type="molecule type" value="Genomic_DNA"/>
</dbReference>
<dbReference type="EMBL" id="AB162587">
    <property type="protein sequence ID" value="BAD42805.1"/>
    <property type="molecule type" value="Genomic_DNA"/>
</dbReference>
<dbReference type="EMBL" id="AB162588">
    <property type="protein sequence ID" value="BAD42806.1"/>
    <property type="molecule type" value="Genomic_DNA"/>
</dbReference>
<dbReference type="EMBL" id="AB162589">
    <property type="protein sequence ID" value="BAD42807.1"/>
    <property type="molecule type" value="Genomic_DNA"/>
</dbReference>
<dbReference type="EMBL" id="AB162590">
    <property type="protein sequence ID" value="BAD42808.1"/>
    <property type="molecule type" value="Genomic_DNA"/>
</dbReference>
<dbReference type="EMBL" id="AB162591">
    <property type="protein sequence ID" value="BAD42809.1"/>
    <property type="molecule type" value="Genomic_DNA"/>
</dbReference>
<dbReference type="EMBL" id="AB162592">
    <property type="protein sequence ID" value="BAD42810.1"/>
    <property type="molecule type" value="Genomic_DNA"/>
</dbReference>
<dbReference type="EMBL" id="AB162593">
    <property type="protein sequence ID" value="BAD42811.1"/>
    <property type="molecule type" value="Genomic_DNA"/>
</dbReference>
<dbReference type="EMBL" id="AB162594">
    <property type="protein sequence ID" value="BAD42812.1"/>
    <property type="molecule type" value="Genomic_DNA"/>
</dbReference>
<dbReference type="EMBL" id="AB162595">
    <property type="protein sequence ID" value="BAD42813.1"/>
    <property type="molecule type" value="Genomic_DNA"/>
</dbReference>
<dbReference type="EMBL" id="AB162596">
    <property type="protein sequence ID" value="BAD42814.1"/>
    <property type="molecule type" value="Genomic_DNA"/>
</dbReference>
<dbReference type="EMBL" id="AB162597">
    <property type="protein sequence ID" value="BAD42815.1"/>
    <property type="molecule type" value="Genomic_DNA"/>
</dbReference>
<dbReference type="EMBL" id="AB162598">
    <property type="protein sequence ID" value="BAD42816.1"/>
    <property type="molecule type" value="Genomic_DNA"/>
</dbReference>
<dbReference type="EMBL" id="AB162599">
    <property type="protein sequence ID" value="BAD42817.1"/>
    <property type="molecule type" value="Genomic_DNA"/>
</dbReference>
<dbReference type="EMBL" id="AB162600">
    <property type="protein sequence ID" value="BAD42818.1"/>
    <property type="molecule type" value="Genomic_DNA"/>
</dbReference>
<dbReference type="EMBL" id="AE014298">
    <property type="protein sequence ID" value="AAF46060.1"/>
    <property type="molecule type" value="Genomic_DNA"/>
</dbReference>
<dbReference type="RefSeq" id="NP_511050.1">
    <property type="nucleotide sequence ID" value="NM_078495.3"/>
</dbReference>
<dbReference type="SMR" id="Q9W497"/>
<dbReference type="BioGRID" id="69345">
    <property type="interactions" value="2"/>
</dbReference>
<dbReference type="DIP" id="DIP-22363N"/>
<dbReference type="FunCoup" id="Q9W497">
    <property type="interactions" value="35"/>
</dbReference>
<dbReference type="IntAct" id="Q9W497">
    <property type="interactions" value="1"/>
</dbReference>
<dbReference type="STRING" id="7227.FBpp0070768"/>
<dbReference type="TCDB" id="1.A.69.2.6">
    <property type="family name" value="the heteromeric odorant receptor channel (horc) family"/>
</dbReference>
<dbReference type="PaxDb" id="7227-FBpp0070768"/>
<dbReference type="EnsemblMetazoa" id="FBtr0070802">
    <property type="protein sequence ID" value="FBpp0070768"/>
    <property type="gene ID" value="FBgn0003747"/>
</dbReference>
<dbReference type="GeneID" id="44873"/>
<dbReference type="KEGG" id="dme:Dmel_CG15779"/>
<dbReference type="AGR" id="FB:FBgn0003747"/>
<dbReference type="CTD" id="44873"/>
<dbReference type="FlyBase" id="FBgn0003747">
    <property type="gene designation" value="Gr5a"/>
</dbReference>
<dbReference type="VEuPathDB" id="VectorBase:FBgn0003747"/>
<dbReference type="eggNOG" id="ENOG502QTKP">
    <property type="taxonomic scope" value="Eukaryota"/>
</dbReference>
<dbReference type="GeneTree" id="ENSGT00530000064347"/>
<dbReference type="HOGENOM" id="CLU_043581_0_0_1"/>
<dbReference type="InParanoid" id="Q9W497"/>
<dbReference type="OrthoDB" id="5800391at2759"/>
<dbReference type="PhylomeDB" id="Q9W497"/>
<dbReference type="BioGRID-ORCS" id="44873">
    <property type="hits" value="0 hits in 1 CRISPR screen"/>
</dbReference>
<dbReference type="GenomeRNAi" id="44873"/>
<dbReference type="PRO" id="PR:Q9W497"/>
<dbReference type="Proteomes" id="UP000000803">
    <property type="component" value="Chromosome X"/>
</dbReference>
<dbReference type="Bgee" id="FBgn0003747">
    <property type="expression patterns" value="Expressed in gustatory organ and 1 other cell type or tissue"/>
</dbReference>
<dbReference type="ExpressionAtlas" id="Q9W497">
    <property type="expression patterns" value="baseline and differential"/>
</dbReference>
<dbReference type="GO" id="GO:0016020">
    <property type="term" value="C:membrane"/>
    <property type="evidence" value="ECO:0000303"/>
    <property type="project" value="UniProtKB"/>
</dbReference>
<dbReference type="GO" id="GO:0005886">
    <property type="term" value="C:plasma membrane"/>
    <property type="evidence" value="ECO:0000250"/>
    <property type="project" value="FlyBase"/>
</dbReference>
<dbReference type="GO" id="GO:0015276">
    <property type="term" value="F:ligand-gated monoatomic ion channel activity"/>
    <property type="evidence" value="ECO:0000250"/>
    <property type="project" value="FlyBase"/>
</dbReference>
<dbReference type="GO" id="GO:0033041">
    <property type="term" value="F:sweet taste receptor activity"/>
    <property type="evidence" value="ECO:0000315"/>
    <property type="project" value="FlyBase"/>
</dbReference>
<dbReference type="GO" id="GO:0008527">
    <property type="term" value="F:taste receptor activity"/>
    <property type="evidence" value="ECO:0000315"/>
    <property type="project" value="UniProtKB"/>
</dbReference>
<dbReference type="GO" id="GO:0001582">
    <property type="term" value="P:detection of chemical stimulus involved in sensory perception of sweet taste"/>
    <property type="evidence" value="ECO:0000315"/>
    <property type="project" value="UniProtKB"/>
</dbReference>
<dbReference type="GO" id="GO:0050912">
    <property type="term" value="P:detection of chemical stimulus involved in sensory perception of taste"/>
    <property type="evidence" value="ECO:0000314"/>
    <property type="project" value="FlyBase"/>
</dbReference>
<dbReference type="GO" id="GO:0034220">
    <property type="term" value="P:monoatomic ion transmembrane transport"/>
    <property type="evidence" value="ECO:0000250"/>
    <property type="project" value="FlyBase"/>
</dbReference>
<dbReference type="GO" id="GO:0007637">
    <property type="term" value="P:proboscis extension reflex"/>
    <property type="evidence" value="ECO:0000315"/>
    <property type="project" value="FlyBase"/>
</dbReference>
<dbReference type="GO" id="GO:0010353">
    <property type="term" value="P:response to trehalose"/>
    <property type="evidence" value="ECO:0000315"/>
    <property type="project" value="FlyBase"/>
</dbReference>
<dbReference type="GO" id="GO:0050916">
    <property type="term" value="P:sensory perception of sweet taste"/>
    <property type="evidence" value="ECO:0000315"/>
    <property type="project" value="FlyBase"/>
</dbReference>
<dbReference type="GO" id="GO:0050909">
    <property type="term" value="P:sensory perception of taste"/>
    <property type="evidence" value="ECO:0000314"/>
    <property type="project" value="FlyBase"/>
</dbReference>
<dbReference type="GO" id="GO:0007165">
    <property type="term" value="P:signal transduction"/>
    <property type="evidence" value="ECO:0007669"/>
    <property type="project" value="UniProtKB-KW"/>
</dbReference>
<dbReference type="InterPro" id="IPR009318">
    <property type="entry name" value="Gustatory_rcpt"/>
</dbReference>
<dbReference type="PANTHER" id="PTHR21421">
    <property type="entry name" value="GUSTATORY RECEPTOR"/>
    <property type="match status" value="1"/>
</dbReference>
<dbReference type="PANTHER" id="PTHR21421:SF29">
    <property type="entry name" value="GUSTATORY RECEPTOR 5A FOR TREHALOSE-RELATED"/>
    <property type="match status" value="1"/>
</dbReference>
<dbReference type="Pfam" id="PF06151">
    <property type="entry name" value="Trehalose_recp"/>
    <property type="match status" value="1"/>
</dbReference>
<dbReference type="PIRSF" id="PIRSF038981">
    <property type="entry name" value="GRP"/>
    <property type="match status" value="1"/>
</dbReference>
<reference key="1">
    <citation type="journal article" date="2001" name="Curr. Biol.">
        <title>Trehalose sensitivity in Drosophila correlates with mutations in and expression of the gustatory receptor gene Gr5a.</title>
        <authorList>
            <person name="Ueno K."/>
            <person name="Ohta M."/>
            <person name="Morita H."/>
            <person name="Mikuni Y."/>
            <person name="Nakajima S."/>
            <person name="Yamamoto K."/>
            <person name="Isono K."/>
        </authorList>
    </citation>
    <scope>NUCLEOTIDE SEQUENCE [GENOMIC DNA / MRNA]</scope>
    <scope>FUNCTION</scope>
    <scope>VARIANTS</scope>
    <scope>DISRUPTION PHENOTYPE</scope>
    <source>
        <strain>AK07</strain>
        <strain>AK10</strain>
        <strain>AK13</strain>
        <strain>AK17</strain>
        <strain>AK19</strain>
        <strain>AK41</strain>
        <strain>Canton-S</strain>
        <strain>EP(X)496</strain>
        <strain>HG84</strain>
        <strain>Oregon-R</strain>
        <strain>Shanghai</strain>
        <strain>Singapore</strain>
        <strain>Tananarive</strain>
        <strain>w cv</strain>
        <strain>w cx</strain>
    </source>
</reference>
<reference key="2">
    <citation type="journal article" date="2004" name="Genetics">
        <title>A single-amino-acid change of the gustatory receptor gene, Gr5a, has a major effect on trehalose sensitivity in a natural population of Drosophila melanogaster.</title>
        <authorList>
            <person name="Inomata N."/>
            <person name="Goto H."/>
            <person name="Itoh M."/>
            <person name="Isono K."/>
        </authorList>
    </citation>
    <scope>NUCLEOTIDE SEQUENCE [GENOMIC DNA]</scope>
    <scope>FUNCTION</scope>
    <scope>VARIANT THR-218</scope>
    <source>
        <strain>KY02-C301</strain>
        <strain>KY02-C302</strain>
        <strain>KY02-C303</strain>
        <strain>KY02-C304</strain>
        <strain>KY02-C305</strain>
        <strain>KY02-C307</strain>
        <strain>KY02-C308</strain>
        <strain>KY02-C309</strain>
        <strain>KY02-C310</strain>
        <strain>KY02-C311</strain>
        <strain>KY02-C312</strain>
        <strain>KY02-C314</strain>
        <strain>KY02-C315</strain>
        <strain>KY02-C316</strain>
        <strain>KY02-C319</strain>
        <strain>KY02-C320</strain>
        <strain>KY02-C323</strain>
        <strain>KY02-C325</strain>
        <strain>KY02-C326</strain>
        <strain>KY02-C327</strain>
        <strain>KY02-C330</strain>
        <strain>KY02-C331</strain>
        <strain>KY02-C332</strain>
        <strain>KY02-C333</strain>
        <strain>KY02-C335</strain>
        <strain>KY02-C336</strain>
        <strain>KY02-C337</strain>
        <strain>KY02-C338</strain>
        <strain>KY02-C341</strain>
        <strain>KY02-C342</strain>
        <strain>KY02-C343</strain>
        <strain>KY02-C344</strain>
        <strain>KY02-C345</strain>
        <strain>KY02-C346</strain>
        <strain>KY02-C347</strain>
        <strain>KY02-C348</strain>
        <strain>KY02-C349</strain>
        <strain>KY02-C350</strain>
        <strain>KY02-C351</strain>
        <strain>KY02-C352</strain>
        <strain>KY02-C353</strain>
        <strain>KY02-C355</strain>
        <strain>KY02-C356</strain>
        <strain>KY02-C358</strain>
        <strain>KY02-C359</strain>
        <strain>KY02-C361</strain>
        <strain>KY02-C362</strain>
        <strain>KY02-C365</strain>
        <strain>KY02-C366</strain>
        <strain>KY02-C367</strain>
        <strain>KY02-C368</strain>
        <strain>KY02-C370</strain>
        <strain>KY02-C372</strain>
        <strain>KY02-C373</strain>
        <strain>KY02-C374</strain>
        <strain>KY02-C376</strain>
        <strain>KY02-C377</strain>
        <strain>KY02-C378</strain>
        <strain>KY02-C379</strain>
        <strain>KY02-C380</strain>
        <strain>KY02-C381</strain>
        <strain>KY02-C382</strain>
        <strain>KY02-C383</strain>
        <strain>KY02-C384</strain>
        <strain>KY02-C387</strain>
        <strain>KY02-C388</strain>
        <strain>KY02-C389</strain>
        <strain>KY02-C390</strain>
        <strain>KY02-C392</strain>
        <strain>KY02-C393</strain>
        <strain>KY02-C394</strain>
        <strain>KY02-C395</strain>
        <strain>KY02-C396</strain>
        <strain>KY02-C397</strain>
        <strain>KY02-C400</strain>
        <strain>KY02-C402</strain>
        <strain>KY02-C404</strain>
        <strain>KY02-C407</strain>
        <strain>KY02-C411</strain>
        <strain>KY02-C412</strain>
        <strain>KY02-C413</strain>
        <strain>KY02-C414</strain>
        <strain>KY02-C417</strain>
        <strain>KY02-C419</strain>
        <strain>KY02-C420</strain>
        <strain>KY02-C421</strain>
        <strain>KY02-C425</strain>
        <strain>KY02-C426</strain>
        <strain>KY02-C428</strain>
        <strain>KY02-C429</strain>
        <strain>KY02-C432</strain>
        <strain>KY02-C433</strain>
        <strain>KY02-C434</strain>
        <strain>KY02-C435</strain>
        <strain>KY02-C436</strain>
        <strain>KY02-C439</strain>
        <strain>KY02-C441</strain>
        <strain>KY02-C443</strain>
        <strain>KY02-C445</strain>
        <strain>KY02-C446</strain>
        <strain>KY02-C447</strain>
        <strain>KY02-C448</strain>
        <strain>KY02-C449</strain>
        <strain>KY02-C451</strain>
        <strain>KY02-C452</strain>
        <strain>KY02-C453</strain>
        <strain>KY02-C454</strain>
        <strain>KY02-C455</strain>
        <strain>KY02-C456</strain>
        <strain>KY02-C457</strain>
        <strain>KY02-C460</strain>
        <strain>KY02-C462</strain>
        <strain>KY02-C463</strain>
        <strain>KY02-C464</strain>
        <strain>KY02-C465</strain>
        <strain>KY02-C467</strain>
        <strain>KY02-C469</strain>
        <strain>KY02-C470</strain>
        <strain>KY02-C476</strain>
        <strain>KY02-C477</strain>
        <strain>KY02-C478</strain>
        <strain>KY02-C479</strain>
        <strain>KY02-C480</strain>
        <strain>KY02-C481</strain>
        <strain>KY02-C483</strain>
        <strain>KY02-C484</strain>
        <strain>KY02-C485</strain>
        <strain>KY02-C486</strain>
        <strain>KY02-C487</strain>
        <strain>KY02-C488</strain>
        <strain>KY02-C489</strain>
        <strain>KY02-C490</strain>
        <strain>KY02-C491</strain>
        <strain>KY02-C492</strain>
        <strain>KY02-C493</strain>
        <strain>KY02-C494</strain>
        <strain>KY02-C496</strain>
        <strain>KY02-C497</strain>
        <strain>KY02-C500</strain>
        <strain>KY02-C504</strain>
        <strain>KY02-C508</strain>
        <strain>KY02-C510</strain>
        <strain>KY02-C511</strain>
        <strain>KY02-C512</strain>
        <strain>KY02-C513</strain>
        <strain>KY02-C514</strain>
        <strain>KY02-C515</strain>
        <strain>KY02-C516</strain>
        <strain>KY02-C517</strain>
        <strain>KY02-C518</strain>
        <strain>KY02-C519</strain>
        <strain>KY02-C520</strain>
    </source>
</reference>
<reference key="3">
    <citation type="journal article" date="2000" name="Science">
        <title>The genome sequence of Drosophila melanogaster.</title>
        <authorList>
            <person name="Adams M.D."/>
            <person name="Celniker S.E."/>
            <person name="Holt R.A."/>
            <person name="Evans C.A."/>
            <person name="Gocayne J.D."/>
            <person name="Amanatides P.G."/>
            <person name="Scherer S.E."/>
            <person name="Li P.W."/>
            <person name="Hoskins R.A."/>
            <person name="Galle R.F."/>
            <person name="George R.A."/>
            <person name="Lewis S.E."/>
            <person name="Richards S."/>
            <person name="Ashburner M."/>
            <person name="Henderson S.N."/>
            <person name="Sutton G.G."/>
            <person name="Wortman J.R."/>
            <person name="Yandell M.D."/>
            <person name="Zhang Q."/>
            <person name="Chen L.X."/>
            <person name="Brandon R.C."/>
            <person name="Rogers Y.-H.C."/>
            <person name="Blazej R.G."/>
            <person name="Champe M."/>
            <person name="Pfeiffer B.D."/>
            <person name="Wan K.H."/>
            <person name="Doyle C."/>
            <person name="Baxter E.G."/>
            <person name="Helt G."/>
            <person name="Nelson C.R."/>
            <person name="Miklos G.L.G."/>
            <person name="Abril J.F."/>
            <person name="Agbayani A."/>
            <person name="An H.-J."/>
            <person name="Andrews-Pfannkoch C."/>
            <person name="Baldwin D."/>
            <person name="Ballew R.M."/>
            <person name="Basu A."/>
            <person name="Baxendale J."/>
            <person name="Bayraktaroglu L."/>
            <person name="Beasley E.M."/>
            <person name="Beeson K.Y."/>
            <person name="Benos P.V."/>
            <person name="Berman B.P."/>
            <person name="Bhandari D."/>
            <person name="Bolshakov S."/>
            <person name="Borkova D."/>
            <person name="Botchan M.R."/>
            <person name="Bouck J."/>
            <person name="Brokstein P."/>
            <person name="Brottier P."/>
            <person name="Burtis K.C."/>
            <person name="Busam D.A."/>
            <person name="Butler H."/>
            <person name="Cadieu E."/>
            <person name="Center A."/>
            <person name="Chandra I."/>
            <person name="Cherry J.M."/>
            <person name="Cawley S."/>
            <person name="Dahlke C."/>
            <person name="Davenport L.B."/>
            <person name="Davies P."/>
            <person name="de Pablos B."/>
            <person name="Delcher A."/>
            <person name="Deng Z."/>
            <person name="Mays A.D."/>
            <person name="Dew I."/>
            <person name="Dietz S.M."/>
            <person name="Dodson K."/>
            <person name="Doup L.E."/>
            <person name="Downes M."/>
            <person name="Dugan-Rocha S."/>
            <person name="Dunkov B.C."/>
            <person name="Dunn P."/>
            <person name="Durbin K.J."/>
            <person name="Evangelista C.C."/>
            <person name="Ferraz C."/>
            <person name="Ferriera S."/>
            <person name="Fleischmann W."/>
            <person name="Fosler C."/>
            <person name="Gabrielian A.E."/>
            <person name="Garg N.S."/>
            <person name="Gelbart W.M."/>
            <person name="Glasser K."/>
            <person name="Glodek A."/>
            <person name="Gong F."/>
            <person name="Gorrell J.H."/>
            <person name="Gu Z."/>
            <person name="Guan P."/>
            <person name="Harris M."/>
            <person name="Harris N.L."/>
            <person name="Harvey D.A."/>
            <person name="Heiman T.J."/>
            <person name="Hernandez J.R."/>
            <person name="Houck J."/>
            <person name="Hostin D."/>
            <person name="Houston K.A."/>
            <person name="Howland T.J."/>
            <person name="Wei M.-H."/>
            <person name="Ibegwam C."/>
            <person name="Jalali M."/>
            <person name="Kalush F."/>
            <person name="Karpen G.H."/>
            <person name="Ke Z."/>
            <person name="Kennison J.A."/>
            <person name="Ketchum K.A."/>
            <person name="Kimmel B.E."/>
            <person name="Kodira C.D."/>
            <person name="Kraft C.L."/>
            <person name="Kravitz S."/>
            <person name="Kulp D."/>
            <person name="Lai Z."/>
            <person name="Lasko P."/>
            <person name="Lei Y."/>
            <person name="Levitsky A.A."/>
            <person name="Li J.H."/>
            <person name="Li Z."/>
            <person name="Liang Y."/>
            <person name="Lin X."/>
            <person name="Liu X."/>
            <person name="Mattei B."/>
            <person name="McIntosh T.C."/>
            <person name="McLeod M.P."/>
            <person name="McPherson D."/>
            <person name="Merkulov G."/>
            <person name="Milshina N.V."/>
            <person name="Mobarry C."/>
            <person name="Morris J."/>
            <person name="Moshrefi A."/>
            <person name="Mount S.M."/>
            <person name="Moy M."/>
            <person name="Murphy B."/>
            <person name="Murphy L."/>
            <person name="Muzny D.M."/>
            <person name="Nelson D.L."/>
            <person name="Nelson D.R."/>
            <person name="Nelson K.A."/>
            <person name="Nixon K."/>
            <person name="Nusskern D.R."/>
            <person name="Pacleb J.M."/>
            <person name="Palazzolo M."/>
            <person name="Pittman G.S."/>
            <person name="Pan S."/>
            <person name="Pollard J."/>
            <person name="Puri V."/>
            <person name="Reese M.G."/>
            <person name="Reinert K."/>
            <person name="Remington K."/>
            <person name="Saunders R.D.C."/>
            <person name="Scheeler F."/>
            <person name="Shen H."/>
            <person name="Shue B.C."/>
            <person name="Siden-Kiamos I."/>
            <person name="Simpson M."/>
            <person name="Skupski M.P."/>
            <person name="Smith T.J."/>
            <person name="Spier E."/>
            <person name="Spradling A.C."/>
            <person name="Stapleton M."/>
            <person name="Strong R."/>
            <person name="Sun E."/>
            <person name="Svirskas R."/>
            <person name="Tector C."/>
            <person name="Turner R."/>
            <person name="Venter E."/>
            <person name="Wang A.H."/>
            <person name="Wang X."/>
            <person name="Wang Z.-Y."/>
            <person name="Wassarman D.A."/>
            <person name="Weinstock G.M."/>
            <person name="Weissenbach J."/>
            <person name="Williams S.M."/>
            <person name="Woodage T."/>
            <person name="Worley K.C."/>
            <person name="Wu D."/>
            <person name="Yang S."/>
            <person name="Yao Q.A."/>
            <person name="Ye J."/>
            <person name="Yeh R.-F."/>
            <person name="Zaveri J.S."/>
            <person name="Zhan M."/>
            <person name="Zhang G."/>
            <person name="Zhao Q."/>
            <person name="Zheng L."/>
            <person name="Zheng X.H."/>
            <person name="Zhong F.N."/>
            <person name="Zhong W."/>
            <person name="Zhou X."/>
            <person name="Zhu S.C."/>
            <person name="Zhu X."/>
            <person name="Smith H.O."/>
            <person name="Gibbs R.A."/>
            <person name="Myers E.W."/>
            <person name="Rubin G.M."/>
            <person name="Venter J.C."/>
        </authorList>
    </citation>
    <scope>NUCLEOTIDE SEQUENCE [LARGE SCALE GENOMIC DNA]</scope>
    <source>
        <strain>Berkeley</strain>
    </source>
</reference>
<reference key="4">
    <citation type="journal article" date="2002" name="Genome Biol.">
        <title>Annotation of the Drosophila melanogaster euchromatic genome: a systematic review.</title>
        <authorList>
            <person name="Misra S."/>
            <person name="Crosby M.A."/>
            <person name="Mungall C.J."/>
            <person name="Matthews B.B."/>
            <person name="Campbell K.S."/>
            <person name="Hradecky P."/>
            <person name="Huang Y."/>
            <person name="Kaminker J.S."/>
            <person name="Millburn G.H."/>
            <person name="Prochnik S.E."/>
            <person name="Smith C.D."/>
            <person name="Tupy J.L."/>
            <person name="Whitfield E.J."/>
            <person name="Bayraktaroglu L."/>
            <person name="Berman B.P."/>
            <person name="Bettencourt B.R."/>
            <person name="Celniker S.E."/>
            <person name="de Grey A.D.N.J."/>
            <person name="Drysdale R.A."/>
            <person name="Harris N.L."/>
            <person name="Richter J."/>
            <person name="Russo S."/>
            <person name="Schroeder A.J."/>
            <person name="Shu S.Q."/>
            <person name="Stapleton M."/>
            <person name="Yamada C."/>
            <person name="Ashburner M."/>
            <person name="Gelbart W.M."/>
            <person name="Rubin G.M."/>
            <person name="Lewis S.E."/>
        </authorList>
    </citation>
    <scope>GENOME REANNOTATION</scope>
    <source>
        <strain>Berkeley</strain>
    </source>
</reference>
<reference key="5">
    <citation type="journal article" date="2000" name="Science">
        <title>Candidate taste receptors in Drosophila.</title>
        <authorList>
            <person name="Clyne P.J."/>
            <person name="Warr C.G."/>
            <person name="Carlson J.R."/>
        </authorList>
    </citation>
    <scope>IDENTIFICATION</scope>
</reference>
<reference key="6">
    <citation type="journal article" date="2001" name="Curr. Biol.">
        <title>Spatially restricted expression of candidate taste receptors in the Drosophila gustatory system.</title>
        <authorList>
            <person name="Dunipace L."/>
            <person name="Meister S."/>
            <person name="McNealy C."/>
            <person name="Amrein H."/>
        </authorList>
    </citation>
    <scope>IDENTIFICATION</scope>
</reference>
<reference key="7">
    <citation type="journal article" date="2001" name="Nat. Neurosci.">
        <title>A Gr receptor is required for response to the sugar trehalose in taste neurons of Drosophila.</title>
        <authorList>
            <person name="Dahanukar A."/>
            <person name="Foster K."/>
            <person name="van der Goes van Naters W.M."/>
            <person name="Carlson J.R."/>
        </authorList>
    </citation>
    <scope>FUNCTION</scope>
    <scope>TISSUE SPECIFICITY</scope>
</reference>
<reference key="8">
    <citation type="journal article" date="2003" name="Proc. Natl. Acad. Sci. U.S.A.">
        <title>Drosophila Gr5a encodes a taste receptor tuned to trehalose.</title>
        <authorList>
            <person name="Chyb S."/>
            <person name="Dahanukar A."/>
            <person name="Wickens A."/>
            <person name="Carlson J.R."/>
        </authorList>
    </citation>
    <scope>FUNCTION</scope>
    <scope>TISSUE SPECIFICITY</scope>
</reference>
<reference key="9">
    <citation type="journal article" date="2003" name="Proc. Natl. Acad. Sci. U.S.A.">
        <title>Molecular evolution of the insect chemoreceptor gene superfamily in Drosophila melanogaster.</title>
        <authorList>
            <person name="Robertson H.M."/>
            <person name="Warr C.G."/>
            <person name="Carlson J.R."/>
        </authorList>
    </citation>
    <scope>IDENTIFICATION IN THE GUSTATORY RECEPTOR SUBFAMILY</scope>
</reference>
<reference key="10">
    <citation type="journal article" date="2004" name="Curr. Biol.">
        <title>Taste perception and coding in Drosophila.</title>
        <authorList>
            <person name="Thorne N."/>
            <person name="Chromey C."/>
            <person name="Bray S."/>
            <person name="Amrein H."/>
        </authorList>
    </citation>
    <scope>FUNCTION</scope>
    <scope>TISSUE SPECIFICITY</scope>
</reference>
<reference key="11">
    <citation type="journal article" date="2005" name="Chem. Senses">
        <title>Trehalose sensitivity of the gustatory receptor neurons expressing wild-type, mutant and ectopic Gr5a in Drosophila.</title>
        <authorList>
            <person name="Isono K."/>
            <person name="Morita H."/>
            <person name="Kohatsu S."/>
            <person name="Ueno K."/>
            <person name="Matsubayashi H."/>
            <person name="Yamamoto M.T."/>
        </authorList>
    </citation>
    <scope>FUNCTION</scope>
    <scope>DISRUPTION PHENOTYPE</scope>
</reference>
<reference key="12">
    <citation type="journal article" date="2006" name="J. Neurosci.">
        <title>Gsalpha is involved in sugar perception in Drosophila melanogaster.</title>
        <authorList>
            <person name="Ueno K."/>
            <person name="Kohatsu S."/>
            <person name="Clay C."/>
            <person name="Forte M."/>
            <person name="Isono K."/>
            <person name="Kidokoro Y."/>
        </authorList>
    </citation>
    <scope>FUNCTION</scope>
    <scope>DISRUPTION PHENOTYPE</scope>
</reference>
<reference key="13">
    <citation type="journal article" date="2006" name="Neuron">
        <title>Imaging taste responses in the fly brain reveals a functional map of taste category and behavior.</title>
        <authorList>
            <person name="Marella S."/>
            <person name="Fischler W."/>
            <person name="Kong P."/>
            <person name="Asgarian S."/>
            <person name="Rueckert E."/>
            <person name="Scott K."/>
        </authorList>
    </citation>
    <scope>FUNCTION IN ACCEPTANCE BEHAVIOR</scope>
</reference>
<reference key="14">
    <citation type="journal article" date="2007" name="Neuron">
        <title>Two Gr genes underlie sugar reception in Drosophila.</title>
        <authorList>
            <person name="Dahanukar A."/>
            <person name="Lei Y.T."/>
            <person name="Kwon J.Y."/>
            <person name="Carlson J.R."/>
        </authorList>
    </citation>
    <scope>FUNCTION</scope>
</reference>
<reference key="15">
    <citation type="journal article" date="2010" name="Chem. Senses">
        <title>Mutants in phospholipid signaling attenuate the behavioral response of adult Drosophila to trehalose.</title>
        <authorList>
            <person name="Kain P."/>
            <person name="Badsha F."/>
            <person name="Hussain S.M."/>
            <person name="Nair A."/>
            <person name="Hasan G."/>
            <person name="Rodrigues V."/>
        </authorList>
    </citation>
    <scope>FUNCTION</scope>
</reference>
<organism>
    <name type="scientific">Drosophila melanogaster</name>
    <name type="common">Fruit fly</name>
    <dbReference type="NCBI Taxonomy" id="7227"/>
    <lineage>
        <taxon>Eukaryota</taxon>
        <taxon>Metazoa</taxon>
        <taxon>Ecdysozoa</taxon>
        <taxon>Arthropoda</taxon>
        <taxon>Hexapoda</taxon>
        <taxon>Insecta</taxon>
        <taxon>Pterygota</taxon>
        <taxon>Neoptera</taxon>
        <taxon>Endopterygota</taxon>
        <taxon>Diptera</taxon>
        <taxon>Brachycera</taxon>
        <taxon>Muscomorpha</taxon>
        <taxon>Ephydroidea</taxon>
        <taxon>Drosophilidae</taxon>
        <taxon>Drosophila</taxon>
        <taxon>Sophophora</taxon>
    </lineage>
</organism>
<accession>Q9W497</accession>
<accession>Q68B17</accession>
<accession>Q68B25</accession>
<accession>Q68B58</accession>
<accession>Q68B67</accession>
<accession>Q68B82</accession>
<accession>Q68B87</accession>
<accession>Q68B91</accession>
<accession>Q68BB7</accession>
<accession>Q68BC2</accession>
<accession>Q68BC4</accession>
<accession>Q68BC6</accession>
<accession>Q68BD1</accession>
<accession>Q68BD4</accession>
<accession>Q68BE7</accession>
<accession>Q68BE8</accession>
<accession>Q68BF3</accession>
<accession>Q95NT7</accession>
<accession>Q95NX8</accession>
<accession>Q95NY8</accession>
<accession>Q95NZ9</accession>
<accession>Q95P00</accession>
<accession>Q95YH9</accession>
<accession>Q95YI0</accession>
<accession>Q95YI1</accession>
<accession>Q95YN5</accession>
<accession>Q95YN6</accession>
<accession>Q95YN7</accession>